<reference key="1">
    <citation type="journal article" date="2003" name="Science">
        <title>Role of mobile DNA in the evolution of vancomycin-resistant Enterococcus faecalis.</title>
        <authorList>
            <person name="Paulsen I.T."/>
            <person name="Banerjei L."/>
            <person name="Myers G.S.A."/>
            <person name="Nelson K.E."/>
            <person name="Seshadri R."/>
            <person name="Read T.D."/>
            <person name="Fouts D.E."/>
            <person name="Eisen J.A."/>
            <person name="Gill S.R."/>
            <person name="Heidelberg J.F."/>
            <person name="Tettelin H."/>
            <person name="Dodson R.J."/>
            <person name="Umayam L.A."/>
            <person name="Brinkac L.M."/>
            <person name="Beanan M.J."/>
            <person name="Daugherty S.C."/>
            <person name="DeBoy R.T."/>
            <person name="Durkin S.A."/>
            <person name="Kolonay J.F."/>
            <person name="Madupu R."/>
            <person name="Nelson W.C."/>
            <person name="Vamathevan J.J."/>
            <person name="Tran B."/>
            <person name="Upton J."/>
            <person name="Hansen T."/>
            <person name="Shetty J."/>
            <person name="Khouri H.M."/>
            <person name="Utterback T.R."/>
            <person name="Radune D."/>
            <person name="Ketchum K.A."/>
            <person name="Dougherty B.A."/>
            <person name="Fraser C.M."/>
        </authorList>
    </citation>
    <scope>NUCLEOTIDE SEQUENCE [LARGE SCALE GENOMIC DNA]</scope>
    <source>
        <strain>ATCC 700802 / V583</strain>
    </source>
</reference>
<reference key="2">
    <citation type="journal article" date="2012" name="J. Mol. Biol.">
        <title>Characterization of the chitinolytic machinery of Enterococcus faecalis V583 and high-resolution structure of its oxidative CBM33 enzyme.</title>
        <authorList>
            <person name="Vaaje-Kolstad G."/>
            <person name="Bohle L.A."/>
            <person name="Gaseidnes S."/>
            <person name="Dalhus B."/>
            <person name="Bjoras M."/>
            <person name="Mathiesen G."/>
            <person name="Eijsink V.G."/>
        </authorList>
    </citation>
    <scope>FUNCTION</scope>
    <scope>CATALYTIC ACTIVITY</scope>
    <scope>SUBCELLULAR LOCATION</scope>
    <scope>PATHWAY</scope>
</reference>
<sequence length="348" mass="38339">MKLKKIIPAFPLLSTVAVGLWLTPTQASADAADTMVDISGKKVLVGYWHNWASKGRDGYKQGTSASLNLSEVNQAYNVVPVSFMKSDGTTRIPTFKPYNQTDTAFRQEVAQLNSQGRAVLLALGGADAHIQLVKGDEQAFANEIIRQVETYGFDGLDIDLEQLAITAGDNQTVIPATLKIVKDHYRAQGKNFIITMAPEFPYLKPGAAYETYITSLNGYYDYIAPQLYNQGGDGVWVDEIMTWVAQSNDALKYEFLYYMSDSLIHGTRGYLQIPNDKLVLGLPANRDAAGSGYVVEATPVAKTFDQLAKDGNPIRGLMTWSANWDVGQDVNGKSYNNEFATRYSNLVK</sequence>
<name>CHI18_ENTFA</name>
<gene>
    <name evidence="7" type="ordered locus">EF_0361</name>
</gene>
<protein>
    <recommendedName>
        <fullName evidence="4">Chitinase</fullName>
        <ecNumber evidence="3">3.2.1.14</ecNumber>
    </recommendedName>
    <alternativeName>
        <fullName evidence="4">EfChi18A</fullName>
    </alternativeName>
</protein>
<dbReference type="EC" id="3.2.1.14" evidence="3"/>
<dbReference type="EMBL" id="AE016830">
    <property type="protein sequence ID" value="AAO80224.1"/>
    <property type="molecule type" value="Genomic_DNA"/>
</dbReference>
<dbReference type="RefSeq" id="NP_814153.1">
    <property type="nucleotide sequence ID" value="NC_004668.1"/>
</dbReference>
<dbReference type="RefSeq" id="WP_010773692.1">
    <property type="nucleotide sequence ID" value="NZ_KE136524.1"/>
</dbReference>
<dbReference type="SMR" id="Q838S2"/>
<dbReference type="STRING" id="226185.EF_0361"/>
<dbReference type="CAZy" id="GH18">
    <property type="family name" value="Glycoside Hydrolase Family 18"/>
</dbReference>
<dbReference type="EnsemblBacteria" id="AAO80224">
    <property type="protein sequence ID" value="AAO80224"/>
    <property type="gene ID" value="EF_0361"/>
</dbReference>
<dbReference type="KEGG" id="efa:EF0361"/>
<dbReference type="PATRIC" id="fig|226185.45.peg.2968"/>
<dbReference type="eggNOG" id="COG3469">
    <property type="taxonomic scope" value="Bacteria"/>
</dbReference>
<dbReference type="HOGENOM" id="CLU_067535_0_0_9"/>
<dbReference type="UniPathway" id="UPA00349"/>
<dbReference type="Proteomes" id="UP000001415">
    <property type="component" value="Chromosome"/>
</dbReference>
<dbReference type="GO" id="GO:0005576">
    <property type="term" value="C:extracellular region"/>
    <property type="evidence" value="ECO:0007669"/>
    <property type="project" value="UniProtKB-SubCell"/>
</dbReference>
<dbReference type="GO" id="GO:0008061">
    <property type="term" value="F:chitin binding"/>
    <property type="evidence" value="ECO:0000314"/>
    <property type="project" value="UniProtKB"/>
</dbReference>
<dbReference type="GO" id="GO:0004568">
    <property type="term" value="F:chitinase activity"/>
    <property type="evidence" value="ECO:0000314"/>
    <property type="project" value="UniProtKB"/>
</dbReference>
<dbReference type="GO" id="GO:0008843">
    <property type="term" value="F:endochitinase activity"/>
    <property type="evidence" value="ECO:0007669"/>
    <property type="project" value="UniProtKB-EC"/>
</dbReference>
<dbReference type="GO" id="GO:0006032">
    <property type="term" value="P:chitin catabolic process"/>
    <property type="evidence" value="ECO:0000314"/>
    <property type="project" value="UniProtKB"/>
</dbReference>
<dbReference type="GO" id="GO:0000272">
    <property type="term" value="P:polysaccharide catabolic process"/>
    <property type="evidence" value="ECO:0007669"/>
    <property type="project" value="UniProtKB-KW"/>
</dbReference>
<dbReference type="CDD" id="cd02871">
    <property type="entry name" value="GH18_chitinase_D-like"/>
    <property type="match status" value="1"/>
</dbReference>
<dbReference type="FunFam" id="3.20.20.80:FF:000133">
    <property type="entry name" value="Chitinase C1"/>
    <property type="match status" value="1"/>
</dbReference>
<dbReference type="Gene3D" id="3.20.20.80">
    <property type="entry name" value="Glycosidases"/>
    <property type="match status" value="1"/>
</dbReference>
<dbReference type="InterPro" id="IPR011583">
    <property type="entry name" value="Chitinase_II/V-like_cat"/>
</dbReference>
<dbReference type="InterPro" id="IPR001223">
    <property type="entry name" value="Glyco_hydro18_cat"/>
</dbReference>
<dbReference type="InterPro" id="IPR001579">
    <property type="entry name" value="Glyco_hydro_18_chit_AS"/>
</dbReference>
<dbReference type="InterPro" id="IPR017853">
    <property type="entry name" value="Glycoside_hydrolase_SF"/>
</dbReference>
<dbReference type="InterPro" id="IPR050542">
    <property type="entry name" value="Glycosyl_Hydrlase18_Chitinase"/>
</dbReference>
<dbReference type="PANTHER" id="PTHR45708">
    <property type="entry name" value="ENDOCHITINASE"/>
    <property type="match status" value="1"/>
</dbReference>
<dbReference type="PANTHER" id="PTHR45708:SF49">
    <property type="entry name" value="ENDOCHITINASE"/>
    <property type="match status" value="1"/>
</dbReference>
<dbReference type="Pfam" id="PF00704">
    <property type="entry name" value="Glyco_hydro_18"/>
    <property type="match status" value="1"/>
</dbReference>
<dbReference type="SMART" id="SM00636">
    <property type="entry name" value="Glyco_18"/>
    <property type="match status" value="1"/>
</dbReference>
<dbReference type="SUPFAM" id="SSF51445">
    <property type="entry name" value="(Trans)glycosidases"/>
    <property type="match status" value="1"/>
</dbReference>
<dbReference type="PROSITE" id="PS01095">
    <property type="entry name" value="GH18_1"/>
    <property type="match status" value="1"/>
</dbReference>
<dbReference type="PROSITE" id="PS51910">
    <property type="entry name" value="GH18_2"/>
    <property type="match status" value="1"/>
</dbReference>
<organism>
    <name type="scientific">Enterococcus faecalis (strain ATCC 700802 / V583)</name>
    <dbReference type="NCBI Taxonomy" id="226185"/>
    <lineage>
        <taxon>Bacteria</taxon>
        <taxon>Bacillati</taxon>
        <taxon>Bacillota</taxon>
        <taxon>Bacilli</taxon>
        <taxon>Lactobacillales</taxon>
        <taxon>Enterococcaceae</taxon>
        <taxon>Enterococcus</taxon>
    </lineage>
</organism>
<comment type="function">
    <text evidence="3">Involved in chitin degradation. Catalyzes the cleavage of glycosidic linkages in chitooligosaccharides and in alpha- and beta-chitin. Its activity on chitooligosaccharides increases considerably with degrees of polymerization (the initial rate of hydrolysis for GlcNAc5 is about 130-fold higher than that for GlcNAc3). Its activity is greatly stimulated in the presence of the lytic chitin monooxygenase EfCBM33A, which attacks the crystalline structure of chitin and makes the polymer more accessible to the chitinase; combining the two enzymes leads to rapid and complete depolymerization of crystalline chitin, especially with beta-chitin as a substrate. Is likely involved in a chitin degradation pathway that allows E.faecalis V583 to grow on chitin as a carbon source.</text>
</comment>
<comment type="catalytic activity">
    <reaction evidence="3">
        <text>Random endo-hydrolysis of N-acetyl-beta-D-glucosaminide (1-&gt;4)-beta-linkages in chitin and chitodextrins.</text>
        <dbReference type="EC" id="3.2.1.14"/>
    </reaction>
</comment>
<comment type="pathway">
    <text evidence="3">Glycan degradation; chitin degradation.</text>
</comment>
<comment type="subcellular location">
    <subcellularLocation>
        <location evidence="6">Secreted</location>
    </subcellularLocation>
</comment>
<comment type="similarity">
    <text evidence="5">Belongs to the glycosyl hydrolase 18 family.</text>
</comment>
<proteinExistence type="evidence at protein level"/>
<accession>Q838S2</accession>
<evidence type="ECO:0000255" key="1"/>
<evidence type="ECO:0000255" key="2">
    <source>
        <dbReference type="PROSITE-ProRule" id="PRU01258"/>
    </source>
</evidence>
<evidence type="ECO:0000269" key="3">
    <source>
    </source>
</evidence>
<evidence type="ECO:0000303" key="4">
    <source>
    </source>
</evidence>
<evidence type="ECO:0000305" key="5"/>
<evidence type="ECO:0000305" key="6">
    <source>
    </source>
</evidence>
<evidence type="ECO:0000312" key="7">
    <source>
        <dbReference type="EMBL" id="AAO80224.1"/>
    </source>
</evidence>
<keyword id="KW-0119">Carbohydrate metabolism</keyword>
<keyword id="KW-0146">Chitin degradation</keyword>
<keyword id="KW-0326">Glycosidase</keyword>
<keyword id="KW-0378">Hydrolase</keyword>
<keyword id="KW-0624">Polysaccharide degradation</keyword>
<keyword id="KW-1185">Reference proteome</keyword>
<keyword id="KW-0964">Secreted</keyword>
<keyword id="KW-0732">Signal</keyword>
<feature type="signal peptide" evidence="1">
    <location>
        <begin position="1"/>
        <end position="29"/>
    </location>
</feature>
<feature type="chain" id="PRO_5004300419" description="Chitinase">
    <location>
        <begin position="30"/>
        <end position="348"/>
    </location>
</feature>
<feature type="domain" description="GH18" evidence="2">
    <location>
        <begin position="42"/>
        <end position="348"/>
    </location>
</feature>
<feature type="active site" description="Proton donor" evidence="2">
    <location>
        <position position="161"/>
    </location>
</feature>